<organism>
    <name type="scientific">Azotobacter vinelandii (strain DJ / ATCC BAA-1303)</name>
    <dbReference type="NCBI Taxonomy" id="322710"/>
    <lineage>
        <taxon>Bacteria</taxon>
        <taxon>Pseudomonadati</taxon>
        <taxon>Pseudomonadota</taxon>
        <taxon>Gammaproteobacteria</taxon>
        <taxon>Pseudomonadales</taxon>
        <taxon>Pseudomonadaceae</taxon>
        <taxon>Azotobacter</taxon>
    </lineage>
</organism>
<protein>
    <recommendedName>
        <fullName evidence="1">Bis(5'-nucleosyl)-tetraphosphatase, symmetrical</fullName>
        <ecNumber evidence="1">3.6.1.41</ecNumber>
    </recommendedName>
    <alternativeName>
        <fullName evidence="1">Ap4A hydrolase</fullName>
    </alternativeName>
    <alternativeName>
        <fullName evidence="1">Diadenosine 5',5'''-P1,P4-tetraphosphate pyrophosphohydrolase</fullName>
    </alternativeName>
    <alternativeName>
        <fullName evidence="1">Diadenosine tetraphosphatase</fullName>
    </alternativeName>
</protein>
<reference key="1">
    <citation type="journal article" date="2009" name="J. Bacteriol.">
        <title>Genome sequence of Azotobacter vinelandii, an obligate aerobe specialized to support diverse anaerobic metabolic processes.</title>
        <authorList>
            <person name="Setubal J.C."/>
            <person name="Dos Santos P."/>
            <person name="Goldman B.S."/>
            <person name="Ertesvaag H."/>
            <person name="Espin G."/>
            <person name="Rubio L.M."/>
            <person name="Valla S."/>
            <person name="Almeida N.F."/>
            <person name="Balasubramanian D."/>
            <person name="Cromes L."/>
            <person name="Curatti L."/>
            <person name="Du Z."/>
            <person name="Godsy E."/>
            <person name="Goodner B."/>
            <person name="Hellner-Burris K."/>
            <person name="Hernandez J.A."/>
            <person name="Houmiel K."/>
            <person name="Imperial J."/>
            <person name="Kennedy C."/>
            <person name="Larson T.J."/>
            <person name="Latreille P."/>
            <person name="Ligon L.S."/>
            <person name="Lu J."/>
            <person name="Maerk M."/>
            <person name="Miller N.M."/>
            <person name="Norton S."/>
            <person name="O'Carroll I.P."/>
            <person name="Paulsen I."/>
            <person name="Raulfs E.C."/>
            <person name="Roemer R."/>
            <person name="Rosser J."/>
            <person name="Segura D."/>
            <person name="Slater S."/>
            <person name="Stricklin S.L."/>
            <person name="Studholme D.J."/>
            <person name="Sun J."/>
            <person name="Viana C.J."/>
            <person name="Wallin E."/>
            <person name="Wang B."/>
            <person name="Wheeler C."/>
            <person name="Zhu H."/>
            <person name="Dean D.R."/>
            <person name="Dixon R."/>
            <person name="Wood D."/>
        </authorList>
    </citation>
    <scope>NUCLEOTIDE SEQUENCE [LARGE SCALE GENOMIC DNA]</scope>
    <source>
        <strain>DJ / ATCC BAA-1303</strain>
    </source>
</reference>
<keyword id="KW-0378">Hydrolase</keyword>
<sequence>MAVYATGDLQGCLEPLKCLLDRVAFEPGRDRLWLTGDLVNRGPQSLETLRFIHGMRDSVTTVLGNHDLHLLAVAHDIERLKKSDTLREILEAPDRDLLLDWLRWQKLLHHDGERGIVLVHAGIPPQWSLKKALRLAAEVEEALRDDSRLPQFLDGMYGNDPLRWNGRLRGTARLRAITNYFTRMRFCTADGTLDLKSKEGLGSAPSGFTPWFSHPRRKTRGQKILFGHWAALEGHCDEPGVIALDTGCVWGGALTLLNLDTGEYHRCACDGAKGDAG</sequence>
<dbReference type="EC" id="3.6.1.41" evidence="1"/>
<dbReference type="EMBL" id="CP001157">
    <property type="protein sequence ID" value="ACO80790.1"/>
    <property type="molecule type" value="Genomic_DNA"/>
</dbReference>
<dbReference type="RefSeq" id="WP_012703153.1">
    <property type="nucleotide sequence ID" value="NC_012560.1"/>
</dbReference>
<dbReference type="SMR" id="C1DIX1"/>
<dbReference type="STRING" id="322710.Avin_46850"/>
<dbReference type="EnsemblBacteria" id="ACO80790">
    <property type="protein sequence ID" value="ACO80790"/>
    <property type="gene ID" value="Avin_46850"/>
</dbReference>
<dbReference type="GeneID" id="88187560"/>
<dbReference type="KEGG" id="avn:Avin_46850"/>
<dbReference type="eggNOG" id="COG0639">
    <property type="taxonomic scope" value="Bacteria"/>
</dbReference>
<dbReference type="HOGENOM" id="CLU_056184_2_0_6"/>
<dbReference type="OrthoDB" id="9807890at2"/>
<dbReference type="Proteomes" id="UP000002424">
    <property type="component" value="Chromosome"/>
</dbReference>
<dbReference type="GO" id="GO:0008803">
    <property type="term" value="F:bis(5'-nucleosyl)-tetraphosphatase (symmetrical) activity"/>
    <property type="evidence" value="ECO:0007669"/>
    <property type="project" value="UniProtKB-UniRule"/>
</dbReference>
<dbReference type="CDD" id="cd07422">
    <property type="entry name" value="MPP_ApaH"/>
    <property type="match status" value="1"/>
</dbReference>
<dbReference type="Gene3D" id="3.60.21.10">
    <property type="match status" value="1"/>
</dbReference>
<dbReference type="HAMAP" id="MF_00199">
    <property type="entry name" value="ApaH"/>
    <property type="match status" value="1"/>
</dbReference>
<dbReference type="InterPro" id="IPR004617">
    <property type="entry name" value="ApaH"/>
</dbReference>
<dbReference type="InterPro" id="IPR004843">
    <property type="entry name" value="Calcineurin-like_PHP_ApaH"/>
</dbReference>
<dbReference type="InterPro" id="IPR029052">
    <property type="entry name" value="Metallo-depent_PP-like"/>
</dbReference>
<dbReference type="NCBIfam" id="TIGR00668">
    <property type="entry name" value="apaH"/>
    <property type="match status" value="1"/>
</dbReference>
<dbReference type="NCBIfam" id="NF001204">
    <property type="entry name" value="PRK00166.1"/>
    <property type="match status" value="1"/>
</dbReference>
<dbReference type="PANTHER" id="PTHR40942">
    <property type="match status" value="1"/>
</dbReference>
<dbReference type="PANTHER" id="PTHR40942:SF4">
    <property type="entry name" value="CYTOCHROME C5"/>
    <property type="match status" value="1"/>
</dbReference>
<dbReference type="Pfam" id="PF00149">
    <property type="entry name" value="Metallophos"/>
    <property type="match status" value="1"/>
</dbReference>
<dbReference type="PIRSF" id="PIRSF000903">
    <property type="entry name" value="B5n-ttraPtase_sm"/>
    <property type="match status" value="1"/>
</dbReference>
<dbReference type="SUPFAM" id="SSF56300">
    <property type="entry name" value="Metallo-dependent phosphatases"/>
    <property type="match status" value="1"/>
</dbReference>
<evidence type="ECO:0000255" key="1">
    <source>
        <dbReference type="HAMAP-Rule" id="MF_00199"/>
    </source>
</evidence>
<accession>C1DIX1</accession>
<comment type="function">
    <text evidence="1">Hydrolyzes diadenosine 5',5'''-P1,P4-tetraphosphate to yield ADP.</text>
</comment>
<comment type="catalytic activity">
    <reaction evidence="1">
        <text>P(1),P(4)-bis(5'-adenosyl) tetraphosphate + H2O = 2 ADP + 2 H(+)</text>
        <dbReference type="Rhea" id="RHEA:24252"/>
        <dbReference type="ChEBI" id="CHEBI:15377"/>
        <dbReference type="ChEBI" id="CHEBI:15378"/>
        <dbReference type="ChEBI" id="CHEBI:58141"/>
        <dbReference type="ChEBI" id="CHEBI:456216"/>
        <dbReference type="EC" id="3.6.1.41"/>
    </reaction>
</comment>
<comment type="similarity">
    <text evidence="1">Belongs to the Ap4A hydrolase family.</text>
</comment>
<feature type="chain" id="PRO_1000204083" description="Bis(5'-nucleosyl)-tetraphosphatase, symmetrical">
    <location>
        <begin position="1"/>
        <end position="277"/>
    </location>
</feature>
<proteinExistence type="inferred from homology"/>
<name>APAH_AZOVD</name>
<gene>
    <name evidence="1" type="primary">apaH</name>
    <name type="ordered locus">Avin_46850</name>
</gene>